<accession>O75007</accession>
<gene>
    <name type="primary">SOD</name>
</gene>
<name>SODM_PENCH</name>
<evidence type="ECO:0000250" key="1">
    <source>
        <dbReference type="UniProtKB" id="P04179"/>
    </source>
</evidence>
<evidence type="ECO:0000250" key="2">
    <source>
        <dbReference type="UniProtKB" id="P0A0J3"/>
    </source>
</evidence>
<evidence type="ECO:0000250" key="3">
    <source>
        <dbReference type="UniProtKB" id="Q9UQX0"/>
    </source>
</evidence>
<evidence type="ECO:0000255" key="4"/>
<evidence type="ECO:0000305" key="5"/>
<organism>
    <name type="scientific">Penicillium chrysogenum</name>
    <name type="common">Penicillium notatum</name>
    <dbReference type="NCBI Taxonomy" id="5076"/>
    <lineage>
        <taxon>Eukaryota</taxon>
        <taxon>Fungi</taxon>
        <taxon>Dikarya</taxon>
        <taxon>Ascomycota</taxon>
        <taxon>Pezizomycotina</taxon>
        <taxon>Eurotiomycetes</taxon>
        <taxon>Eurotiomycetidae</taxon>
        <taxon>Eurotiales</taxon>
        <taxon>Aspergillaceae</taxon>
        <taxon>Penicillium</taxon>
        <taxon>Penicillium chrysogenum species complex</taxon>
    </lineage>
</organism>
<sequence>MTSQTHTLPPLPYAYDALEPVISKQIMELHHQKHHQTYINNLNAALSAQASATASNDVPTLISLQQKLRFNGGGHINHSLFWKNLTPPGTPANDIAGAPALREAIVSRWGSHEAFVKAFGAELLGLQGSGWGWLVSKGGAKGRLEIVTTKDQDPVNAPDVPVFGVDMWEHAYYLQYLNNKAGYVEGIWKIIHWAEAEKRYTAGVENPLKL</sequence>
<comment type="function">
    <text evidence="1">Destroys superoxide anion radicals which are normally produced within the cells and which are toxic to biological systems.</text>
</comment>
<comment type="catalytic activity">
    <reaction evidence="2">
        <text>2 superoxide + 2 H(+) = H2O2 + O2</text>
        <dbReference type="Rhea" id="RHEA:20696"/>
        <dbReference type="ChEBI" id="CHEBI:15378"/>
        <dbReference type="ChEBI" id="CHEBI:15379"/>
        <dbReference type="ChEBI" id="CHEBI:16240"/>
        <dbReference type="ChEBI" id="CHEBI:18421"/>
        <dbReference type="EC" id="1.15.1.1"/>
    </reaction>
</comment>
<comment type="cofactor">
    <cofactor evidence="3">
        <name>Mn(2+)</name>
        <dbReference type="ChEBI" id="CHEBI:29035"/>
    </cofactor>
    <text evidence="3">Binds 1 Mn(2+) ion per subunit.</text>
</comment>
<comment type="subunit">
    <text evidence="1">Homotetramer.</text>
</comment>
<comment type="subcellular location">
    <subcellularLocation>
        <location evidence="3">Mitochondrion matrix</location>
    </subcellularLocation>
</comment>
<comment type="PTM">
    <text>The N-terminus is blocked.</text>
</comment>
<comment type="similarity">
    <text evidence="5">Belongs to the iron/manganese superoxide dismutase family.</text>
</comment>
<keyword id="KW-0049">Antioxidant</keyword>
<keyword id="KW-0903">Direct protein sequencing</keyword>
<keyword id="KW-0464">Manganese</keyword>
<keyword id="KW-0479">Metal-binding</keyword>
<keyword id="KW-0496">Mitochondrion</keyword>
<keyword id="KW-0560">Oxidoreductase</keyword>
<keyword id="KW-0809">Transit peptide</keyword>
<proteinExistence type="evidence at protein level"/>
<feature type="transit peptide" description="Mitochondrion" evidence="4">
    <location>
        <begin position="1"/>
        <end status="unknown"/>
    </location>
</feature>
<feature type="chain" id="PRO_0000032886" description="Superoxide dismutase [Mn], mitochondrial">
    <location>
        <begin status="unknown"/>
        <end position="210"/>
    </location>
</feature>
<feature type="binding site" evidence="1">
    <location>
        <position position="30"/>
    </location>
    <ligand>
        <name>Mn(2+)</name>
        <dbReference type="ChEBI" id="CHEBI:29035"/>
    </ligand>
</feature>
<feature type="binding site" evidence="1">
    <location>
        <position position="78"/>
    </location>
    <ligand>
        <name>Mn(2+)</name>
        <dbReference type="ChEBI" id="CHEBI:29035"/>
    </ligand>
</feature>
<feature type="binding site" evidence="1">
    <location>
        <position position="166"/>
    </location>
    <ligand>
        <name>Mn(2+)</name>
        <dbReference type="ChEBI" id="CHEBI:29035"/>
    </ligand>
</feature>
<feature type="binding site" evidence="1">
    <location>
        <position position="170"/>
    </location>
    <ligand>
        <name>Mn(2+)</name>
        <dbReference type="ChEBI" id="CHEBI:29035"/>
    </ligand>
</feature>
<reference key="1">
    <citation type="journal article" date="1998" name="Curr. Genet.">
        <title>The manganese superoxide dismutase from the penicillin producer Penicillium chrysogenum.</title>
        <authorList>
            <person name="Diez B."/>
            <person name="Schleissner C."/>
            <person name="Moreno M.A."/>
            <person name="Rodriguez M."/>
            <person name="Collados A."/>
            <person name="Barredo J.L."/>
        </authorList>
    </citation>
    <scope>NUCLEOTIDE SEQUENCE [GENOMIC DNA / MRNA]</scope>
    <scope>PROTEIN SEQUENCE OF 84-102; 118-135 AND 181-190</scope>
    <source>
        <strain>AS-P-78</strain>
    </source>
</reference>
<dbReference type="EC" id="1.15.1.1" evidence="2"/>
<dbReference type="EMBL" id="AF026790">
    <property type="protein sequence ID" value="AAC36585.1"/>
    <property type="molecule type" value="Genomic_DNA"/>
</dbReference>
<dbReference type="EMBL" id="AF026523">
    <property type="protein sequence ID" value="AAC36583.1"/>
    <property type="molecule type" value="mRNA"/>
</dbReference>
<dbReference type="SMR" id="O75007"/>
<dbReference type="PhylomeDB" id="O75007"/>
<dbReference type="GO" id="GO:0005759">
    <property type="term" value="C:mitochondrial matrix"/>
    <property type="evidence" value="ECO:0007669"/>
    <property type="project" value="UniProtKB-SubCell"/>
</dbReference>
<dbReference type="GO" id="GO:0030145">
    <property type="term" value="F:manganese ion binding"/>
    <property type="evidence" value="ECO:0007669"/>
    <property type="project" value="TreeGrafter"/>
</dbReference>
<dbReference type="GO" id="GO:0004784">
    <property type="term" value="F:superoxide dismutase activity"/>
    <property type="evidence" value="ECO:0007669"/>
    <property type="project" value="UniProtKB-EC"/>
</dbReference>
<dbReference type="FunFam" id="1.10.287.990:FF:000001">
    <property type="entry name" value="Superoxide dismutase"/>
    <property type="match status" value="1"/>
</dbReference>
<dbReference type="FunFam" id="3.55.40.20:FF:000004">
    <property type="entry name" value="Superoxide dismutase [Fe]"/>
    <property type="match status" value="1"/>
</dbReference>
<dbReference type="Gene3D" id="1.10.287.990">
    <property type="entry name" value="Fe,Mn superoxide dismutase (SOD) domain"/>
    <property type="match status" value="1"/>
</dbReference>
<dbReference type="Gene3D" id="3.55.40.20">
    <property type="entry name" value="Iron/manganese superoxide dismutase, C-terminal domain"/>
    <property type="match status" value="1"/>
</dbReference>
<dbReference type="InterPro" id="IPR050265">
    <property type="entry name" value="Fe/Mn_Superoxide_Dismutase"/>
</dbReference>
<dbReference type="InterPro" id="IPR001189">
    <property type="entry name" value="Mn/Fe_SOD"/>
</dbReference>
<dbReference type="InterPro" id="IPR019833">
    <property type="entry name" value="Mn/Fe_SOD_BS"/>
</dbReference>
<dbReference type="InterPro" id="IPR019832">
    <property type="entry name" value="Mn/Fe_SOD_C"/>
</dbReference>
<dbReference type="InterPro" id="IPR019831">
    <property type="entry name" value="Mn/Fe_SOD_N"/>
</dbReference>
<dbReference type="InterPro" id="IPR036324">
    <property type="entry name" value="Mn/Fe_SOD_N_sf"/>
</dbReference>
<dbReference type="InterPro" id="IPR036314">
    <property type="entry name" value="SOD_C_sf"/>
</dbReference>
<dbReference type="PANTHER" id="PTHR11404:SF29">
    <property type="entry name" value="SUPEROXIDE DISMUTASE"/>
    <property type="match status" value="1"/>
</dbReference>
<dbReference type="PANTHER" id="PTHR11404">
    <property type="entry name" value="SUPEROXIDE DISMUTASE 2"/>
    <property type="match status" value="1"/>
</dbReference>
<dbReference type="Pfam" id="PF02777">
    <property type="entry name" value="Sod_Fe_C"/>
    <property type="match status" value="1"/>
</dbReference>
<dbReference type="Pfam" id="PF00081">
    <property type="entry name" value="Sod_Fe_N"/>
    <property type="match status" value="1"/>
</dbReference>
<dbReference type="PIRSF" id="PIRSF000349">
    <property type="entry name" value="SODismutase"/>
    <property type="match status" value="1"/>
</dbReference>
<dbReference type="PRINTS" id="PR01703">
    <property type="entry name" value="MNSODISMTASE"/>
</dbReference>
<dbReference type="SUPFAM" id="SSF54719">
    <property type="entry name" value="Fe,Mn superoxide dismutase (SOD), C-terminal domain"/>
    <property type="match status" value="1"/>
</dbReference>
<dbReference type="SUPFAM" id="SSF46609">
    <property type="entry name" value="Fe,Mn superoxide dismutase (SOD), N-terminal domain"/>
    <property type="match status" value="1"/>
</dbReference>
<dbReference type="PROSITE" id="PS00088">
    <property type="entry name" value="SOD_MN"/>
    <property type="match status" value="1"/>
</dbReference>
<protein>
    <recommendedName>
        <fullName>Superoxide dismutase [Mn], mitochondrial</fullName>
        <ecNumber evidence="2">1.15.1.1</ecNumber>
    </recommendedName>
</protein>